<comment type="function">
    <text evidence="1">With S4 and S12 plays an important role in translational accuracy.</text>
</comment>
<comment type="function">
    <text evidence="1">Located at the back of the 30S subunit body where it stabilizes the conformation of the head with respect to the body.</text>
</comment>
<comment type="subunit">
    <text evidence="1">Part of the 30S ribosomal subunit. Contacts proteins S4 and S8.</text>
</comment>
<comment type="domain">
    <text>The N-terminal domain interacts with the head of the 30S subunit; the C-terminal domain interacts with the body and contacts protein S4. The interaction surface between S4 and S5 is involved in control of translational fidelity.</text>
</comment>
<comment type="similarity">
    <text evidence="1">Belongs to the universal ribosomal protein uS5 family.</text>
</comment>
<proteinExistence type="inferred from homology"/>
<keyword id="KW-1185">Reference proteome</keyword>
<keyword id="KW-0687">Ribonucleoprotein</keyword>
<keyword id="KW-0689">Ribosomal protein</keyword>
<keyword id="KW-0694">RNA-binding</keyword>
<keyword id="KW-0699">rRNA-binding</keyword>
<dbReference type="EMBL" id="BX908798">
    <property type="protein sequence ID" value="CAF23152.1"/>
    <property type="molecule type" value="Genomic_DNA"/>
</dbReference>
<dbReference type="RefSeq" id="WP_011174978.1">
    <property type="nucleotide sequence ID" value="NC_005861.2"/>
</dbReference>
<dbReference type="SMR" id="Q6ME47"/>
<dbReference type="STRING" id="264201.pc0428"/>
<dbReference type="KEGG" id="pcu:PC_RS02090"/>
<dbReference type="eggNOG" id="COG0098">
    <property type="taxonomic scope" value="Bacteria"/>
</dbReference>
<dbReference type="HOGENOM" id="CLU_065898_2_2_0"/>
<dbReference type="OrthoDB" id="9809045at2"/>
<dbReference type="Proteomes" id="UP000000529">
    <property type="component" value="Chromosome"/>
</dbReference>
<dbReference type="GO" id="GO:0015935">
    <property type="term" value="C:small ribosomal subunit"/>
    <property type="evidence" value="ECO:0007669"/>
    <property type="project" value="InterPro"/>
</dbReference>
<dbReference type="GO" id="GO:0019843">
    <property type="term" value="F:rRNA binding"/>
    <property type="evidence" value="ECO:0007669"/>
    <property type="project" value="UniProtKB-UniRule"/>
</dbReference>
<dbReference type="GO" id="GO:0003735">
    <property type="term" value="F:structural constituent of ribosome"/>
    <property type="evidence" value="ECO:0007669"/>
    <property type="project" value="InterPro"/>
</dbReference>
<dbReference type="GO" id="GO:0006412">
    <property type="term" value="P:translation"/>
    <property type="evidence" value="ECO:0007669"/>
    <property type="project" value="UniProtKB-UniRule"/>
</dbReference>
<dbReference type="FunFam" id="3.30.160.20:FF:000066">
    <property type="entry name" value="30S ribosomal protein S5"/>
    <property type="match status" value="1"/>
</dbReference>
<dbReference type="FunFam" id="3.30.230.10:FF:000002">
    <property type="entry name" value="30S ribosomal protein S5"/>
    <property type="match status" value="1"/>
</dbReference>
<dbReference type="Gene3D" id="3.30.160.20">
    <property type="match status" value="1"/>
</dbReference>
<dbReference type="Gene3D" id="3.30.230.10">
    <property type="match status" value="1"/>
</dbReference>
<dbReference type="HAMAP" id="MF_01307_B">
    <property type="entry name" value="Ribosomal_uS5_B"/>
    <property type="match status" value="1"/>
</dbReference>
<dbReference type="InterPro" id="IPR020568">
    <property type="entry name" value="Ribosomal_Su5_D2-typ_SF"/>
</dbReference>
<dbReference type="InterPro" id="IPR000851">
    <property type="entry name" value="Ribosomal_uS5"/>
</dbReference>
<dbReference type="InterPro" id="IPR005712">
    <property type="entry name" value="Ribosomal_uS5_bac-type"/>
</dbReference>
<dbReference type="InterPro" id="IPR005324">
    <property type="entry name" value="Ribosomal_uS5_C"/>
</dbReference>
<dbReference type="InterPro" id="IPR013810">
    <property type="entry name" value="Ribosomal_uS5_N"/>
</dbReference>
<dbReference type="InterPro" id="IPR018192">
    <property type="entry name" value="Ribosomal_uS5_N_CS"/>
</dbReference>
<dbReference type="InterPro" id="IPR014721">
    <property type="entry name" value="Ribsml_uS5_D2-typ_fold_subgr"/>
</dbReference>
<dbReference type="NCBIfam" id="TIGR01021">
    <property type="entry name" value="rpsE_bact"/>
    <property type="match status" value="1"/>
</dbReference>
<dbReference type="PANTHER" id="PTHR48277">
    <property type="entry name" value="MITOCHONDRIAL RIBOSOMAL PROTEIN S5"/>
    <property type="match status" value="1"/>
</dbReference>
<dbReference type="PANTHER" id="PTHR48277:SF1">
    <property type="entry name" value="MITOCHONDRIAL RIBOSOMAL PROTEIN S5"/>
    <property type="match status" value="1"/>
</dbReference>
<dbReference type="Pfam" id="PF00333">
    <property type="entry name" value="Ribosomal_S5"/>
    <property type="match status" value="1"/>
</dbReference>
<dbReference type="Pfam" id="PF03719">
    <property type="entry name" value="Ribosomal_S5_C"/>
    <property type="match status" value="1"/>
</dbReference>
<dbReference type="SUPFAM" id="SSF54768">
    <property type="entry name" value="dsRNA-binding domain-like"/>
    <property type="match status" value="1"/>
</dbReference>
<dbReference type="SUPFAM" id="SSF54211">
    <property type="entry name" value="Ribosomal protein S5 domain 2-like"/>
    <property type="match status" value="1"/>
</dbReference>
<dbReference type="PROSITE" id="PS00585">
    <property type="entry name" value="RIBOSOMAL_S5"/>
    <property type="match status" value="1"/>
</dbReference>
<dbReference type="PROSITE" id="PS50881">
    <property type="entry name" value="S5_DSRBD"/>
    <property type="match status" value="1"/>
</dbReference>
<reference key="1">
    <citation type="journal article" date="2004" name="Science">
        <title>Illuminating the evolutionary history of chlamydiae.</title>
        <authorList>
            <person name="Horn M."/>
            <person name="Collingro A."/>
            <person name="Schmitz-Esser S."/>
            <person name="Beier C.L."/>
            <person name="Purkhold U."/>
            <person name="Fartmann B."/>
            <person name="Brandt P."/>
            <person name="Nyakatura G.J."/>
            <person name="Droege M."/>
            <person name="Frishman D."/>
            <person name="Rattei T."/>
            <person name="Mewes H.-W."/>
            <person name="Wagner M."/>
        </authorList>
    </citation>
    <scope>NUCLEOTIDE SEQUENCE [LARGE SCALE GENOMIC DNA]</scope>
    <source>
        <strain>UWE25</strain>
    </source>
</reference>
<evidence type="ECO:0000255" key="1">
    <source>
        <dbReference type="HAMAP-Rule" id="MF_01307"/>
    </source>
</evidence>
<evidence type="ECO:0000305" key="2"/>
<gene>
    <name evidence="1" type="primary">rpsE</name>
    <name type="ordered locus">pc0428</name>
</gene>
<organism>
    <name type="scientific">Protochlamydia amoebophila (strain UWE25)</name>
    <dbReference type="NCBI Taxonomy" id="264201"/>
    <lineage>
        <taxon>Bacteria</taxon>
        <taxon>Pseudomonadati</taxon>
        <taxon>Chlamydiota</taxon>
        <taxon>Chlamydiia</taxon>
        <taxon>Parachlamydiales</taxon>
        <taxon>Parachlamydiaceae</taxon>
        <taxon>Candidatus Protochlamydia</taxon>
    </lineage>
</organism>
<feature type="chain" id="PRO_0000131565" description="Small ribosomal subunit protein uS5">
    <location>
        <begin position="1"/>
        <end position="167"/>
    </location>
</feature>
<feature type="domain" description="S5 DRBM" evidence="1">
    <location>
        <begin position="19"/>
        <end position="82"/>
    </location>
</feature>
<protein>
    <recommendedName>
        <fullName evidence="1">Small ribosomal subunit protein uS5</fullName>
    </recommendedName>
    <alternativeName>
        <fullName evidence="2">30S ribosomal protein S5</fullName>
    </alternativeName>
</protein>
<sequence>MAKNNESPKKEREKAESDLTEKVLHINRCSKVVKGGRKFSFSALILVGDGKGRIGYGFAKANELTDAIRKGGEAARKNMISCPTEGTTIPHEVTVQWDGASVLLKPAPFGTGVIAGSKVRAVLELAGIKDVMAKNLGSSNPINQVKATFQAIQQLLTRDEIKQRRGV</sequence>
<accession>Q6ME47</accession>
<name>RS5_PARUW</name>